<dbReference type="EC" id="3.6.1.17" evidence="1"/>
<dbReference type="EMBL" id="CP000903">
    <property type="protein sequence ID" value="ABY42361.1"/>
    <property type="molecule type" value="Genomic_DNA"/>
</dbReference>
<dbReference type="RefSeq" id="WP_002086958.1">
    <property type="nucleotide sequence ID" value="NC_010184.1"/>
</dbReference>
<dbReference type="SMR" id="A9VJS5"/>
<dbReference type="KEGG" id="bwe:BcerKBAB4_1112"/>
<dbReference type="eggNOG" id="COG0639">
    <property type="taxonomic scope" value="Bacteria"/>
</dbReference>
<dbReference type="HOGENOM" id="CLU_023125_3_0_9"/>
<dbReference type="Proteomes" id="UP000002154">
    <property type="component" value="Chromosome"/>
</dbReference>
<dbReference type="GO" id="GO:0005737">
    <property type="term" value="C:cytoplasm"/>
    <property type="evidence" value="ECO:0007669"/>
    <property type="project" value="TreeGrafter"/>
</dbReference>
<dbReference type="GO" id="GO:0004081">
    <property type="term" value="F:bis(5'-nucleosyl)-tetraphosphatase (asymmetrical) activity"/>
    <property type="evidence" value="ECO:0007669"/>
    <property type="project" value="UniProtKB-UniRule"/>
</dbReference>
<dbReference type="GO" id="GO:0016151">
    <property type="term" value="F:nickel cation binding"/>
    <property type="evidence" value="ECO:0007669"/>
    <property type="project" value="UniProtKB-UniRule"/>
</dbReference>
<dbReference type="GO" id="GO:0016791">
    <property type="term" value="F:phosphatase activity"/>
    <property type="evidence" value="ECO:0007669"/>
    <property type="project" value="TreeGrafter"/>
</dbReference>
<dbReference type="CDD" id="cd07423">
    <property type="entry name" value="MPP_Prp_like"/>
    <property type="match status" value="1"/>
</dbReference>
<dbReference type="Gene3D" id="3.60.21.10">
    <property type="match status" value="1"/>
</dbReference>
<dbReference type="HAMAP" id="MF_01443">
    <property type="entry name" value="PrpE"/>
    <property type="match status" value="1"/>
</dbReference>
<dbReference type="InterPro" id="IPR050126">
    <property type="entry name" value="Ap4A_hydrolase"/>
</dbReference>
<dbReference type="InterPro" id="IPR023937">
    <property type="entry name" value="Bis(5'-nucleosyl)-tetraP_PrpE"/>
</dbReference>
<dbReference type="InterPro" id="IPR004843">
    <property type="entry name" value="Calcineurin-like_PHP_ApaH"/>
</dbReference>
<dbReference type="InterPro" id="IPR029052">
    <property type="entry name" value="Metallo-depent_PP-like"/>
</dbReference>
<dbReference type="InterPro" id="IPR041780">
    <property type="entry name" value="MPP_PrpE-like"/>
</dbReference>
<dbReference type="NCBIfam" id="NF010148">
    <property type="entry name" value="PRK13625.1"/>
    <property type="match status" value="1"/>
</dbReference>
<dbReference type="PANTHER" id="PTHR42850:SF7">
    <property type="entry name" value="BIS(5'-NUCLEOSYL)-TETRAPHOSPHATASE PRPE [ASYMMETRICAL]"/>
    <property type="match status" value="1"/>
</dbReference>
<dbReference type="PANTHER" id="PTHR42850">
    <property type="entry name" value="METALLOPHOSPHOESTERASE"/>
    <property type="match status" value="1"/>
</dbReference>
<dbReference type="Pfam" id="PF00149">
    <property type="entry name" value="Metallophos"/>
    <property type="match status" value="1"/>
</dbReference>
<dbReference type="SUPFAM" id="SSF56300">
    <property type="entry name" value="Metallo-dependent phosphatases"/>
    <property type="match status" value="1"/>
</dbReference>
<evidence type="ECO:0000255" key="1">
    <source>
        <dbReference type="HAMAP-Rule" id="MF_01443"/>
    </source>
</evidence>
<comment type="function">
    <text evidence="1">Asymmetrically hydrolyzes Ap4p to yield AMP and ATP.</text>
</comment>
<comment type="catalytic activity">
    <reaction evidence="1">
        <text>P(1),P(4)-bis(5'-guanosyl) tetraphosphate + H2O = GMP + GTP + 2 H(+)</text>
        <dbReference type="Rhea" id="RHEA:22484"/>
        <dbReference type="ChEBI" id="CHEBI:15377"/>
        <dbReference type="ChEBI" id="CHEBI:15378"/>
        <dbReference type="ChEBI" id="CHEBI:37565"/>
        <dbReference type="ChEBI" id="CHEBI:57553"/>
        <dbReference type="ChEBI" id="CHEBI:58115"/>
        <dbReference type="EC" id="3.6.1.17"/>
    </reaction>
</comment>
<comment type="cofactor">
    <cofactor evidence="1">
        <name>Ni(2+)</name>
        <dbReference type="ChEBI" id="CHEBI:49786"/>
    </cofactor>
</comment>
<comment type="similarity">
    <text evidence="1">Belongs to the PrpE family.</text>
</comment>
<feature type="chain" id="PRO_1000145931" description="Bis(5'-nucleosyl)-tetraphosphatase PrpE [asymmetrical]">
    <location>
        <begin position="1"/>
        <end position="246"/>
    </location>
</feature>
<proteinExistence type="inferred from homology"/>
<gene>
    <name evidence="1" type="primary">prpE</name>
    <name type="ordered locus">BcerKBAB4_1112</name>
</gene>
<keyword id="KW-0378">Hydrolase</keyword>
<keyword id="KW-0533">Nickel</keyword>
<accession>A9VJS5</accession>
<protein>
    <recommendedName>
        <fullName evidence="1">Bis(5'-nucleosyl)-tetraphosphatase PrpE [asymmetrical]</fullName>
        <ecNumber evidence="1">3.6.1.17</ecNumber>
    </recommendedName>
    <alternativeName>
        <fullName evidence="1">Ap4A hydrolase</fullName>
    </alternativeName>
    <alternativeName>
        <fullName evidence="1">Diadenosine 5',5'''-P1,P4-tetraphosphate asymmetrical hydrolase</fullName>
        <shortName evidence="1">Diadenosine tetraphosphatase</shortName>
    </alternativeName>
</protein>
<reference key="1">
    <citation type="journal article" date="2008" name="Chem. Biol. Interact.">
        <title>Extending the Bacillus cereus group genomics to putative food-borne pathogens of different toxicity.</title>
        <authorList>
            <person name="Lapidus A."/>
            <person name="Goltsman E."/>
            <person name="Auger S."/>
            <person name="Galleron N."/>
            <person name="Segurens B."/>
            <person name="Dossat C."/>
            <person name="Land M.L."/>
            <person name="Broussolle V."/>
            <person name="Brillard J."/>
            <person name="Guinebretiere M.-H."/>
            <person name="Sanchis V."/>
            <person name="Nguen-the C."/>
            <person name="Lereclus D."/>
            <person name="Richardson P."/>
            <person name="Wincker P."/>
            <person name="Weissenbach J."/>
            <person name="Ehrlich S.D."/>
            <person name="Sorokin A."/>
        </authorList>
    </citation>
    <scope>NUCLEOTIDE SEQUENCE [LARGE SCALE GENOMIC DNA]</scope>
    <source>
        <strain>KBAB4</strain>
    </source>
</reference>
<organism>
    <name type="scientific">Bacillus mycoides (strain KBAB4)</name>
    <name type="common">Bacillus weihenstephanensis</name>
    <dbReference type="NCBI Taxonomy" id="315730"/>
    <lineage>
        <taxon>Bacteria</taxon>
        <taxon>Bacillati</taxon>
        <taxon>Bacillota</taxon>
        <taxon>Bacilli</taxon>
        <taxon>Bacillales</taxon>
        <taxon>Bacillaceae</taxon>
        <taxon>Bacillus</taxon>
        <taxon>Bacillus cereus group</taxon>
    </lineage>
</organism>
<sequence>MKYDIIGDIHGCFQEFQDLTTKLGYSWDSGIPIHNAKRRLAFVGDITDRGPHSLRMIEIVWELVINRKDAYYAPGNHCNKLYRFFLGRNVTIAHGLETTVAEYEALPSNKQQIIKEKFITLYEQSPLYHILDEKNLTVCHAGIRQDYIGRQDKKVQTFVLYGDITGEKHPDGSPVRQDWAKEYKGETWIVYGHTPVNEPRFVNHTVNIDTGAVFGGKLTGLRYPELETVSVPSSLPFVPEKFRPIS</sequence>
<name>PRPE_BACMK</name>